<accession>C0JB32</accession>
<dbReference type="EC" id="4.6.1.-" evidence="4"/>
<dbReference type="EMBL" id="FJ171467">
    <property type="protein sequence ID" value="ACN48963.1"/>
    <property type="molecule type" value="mRNA"/>
</dbReference>
<dbReference type="SMR" id="C0JB32"/>
<dbReference type="GO" id="GO:0005576">
    <property type="term" value="C:extracellular region"/>
    <property type="evidence" value="ECO:0007669"/>
    <property type="project" value="UniProtKB-SubCell"/>
</dbReference>
<dbReference type="GO" id="GO:0016829">
    <property type="term" value="F:lyase activity"/>
    <property type="evidence" value="ECO:0007669"/>
    <property type="project" value="UniProtKB-KW"/>
</dbReference>
<dbReference type="GO" id="GO:0046872">
    <property type="term" value="F:metal ion binding"/>
    <property type="evidence" value="ECO:0007669"/>
    <property type="project" value="UniProtKB-KW"/>
</dbReference>
<dbReference type="GO" id="GO:0008081">
    <property type="term" value="F:phosphoric diester hydrolase activity"/>
    <property type="evidence" value="ECO:0007669"/>
    <property type="project" value="InterPro"/>
</dbReference>
<dbReference type="GO" id="GO:0090729">
    <property type="term" value="F:toxin activity"/>
    <property type="evidence" value="ECO:0007669"/>
    <property type="project" value="UniProtKB-KW"/>
</dbReference>
<dbReference type="GO" id="GO:0031640">
    <property type="term" value="P:killing of cells of another organism"/>
    <property type="evidence" value="ECO:0007669"/>
    <property type="project" value="UniProtKB-KW"/>
</dbReference>
<dbReference type="GO" id="GO:0016042">
    <property type="term" value="P:lipid catabolic process"/>
    <property type="evidence" value="ECO:0007669"/>
    <property type="project" value="UniProtKB-KW"/>
</dbReference>
<dbReference type="CDD" id="cd08576">
    <property type="entry name" value="GDPD_like_SMaseD_PLD"/>
    <property type="match status" value="1"/>
</dbReference>
<dbReference type="Gene3D" id="3.20.20.190">
    <property type="entry name" value="Phosphatidylinositol (PI) phosphodiesterase"/>
    <property type="match status" value="1"/>
</dbReference>
<dbReference type="InterPro" id="IPR017946">
    <property type="entry name" value="PLC-like_Pdiesterase_TIM-brl"/>
</dbReference>
<dbReference type="Pfam" id="PF13653">
    <property type="entry name" value="GDPD_2"/>
    <property type="match status" value="1"/>
</dbReference>
<dbReference type="SUPFAM" id="SSF51695">
    <property type="entry name" value="PLC-like phosphodiesterases"/>
    <property type="match status" value="1"/>
</dbReference>
<name>A612_LOXHI</name>
<organism>
    <name type="scientific">Loxosceles hirsuta</name>
    <name type="common">Recluse spider</name>
    <dbReference type="NCBI Taxonomy" id="571525"/>
    <lineage>
        <taxon>Eukaryota</taxon>
        <taxon>Metazoa</taxon>
        <taxon>Ecdysozoa</taxon>
        <taxon>Arthropoda</taxon>
        <taxon>Chelicerata</taxon>
        <taxon>Arachnida</taxon>
        <taxon>Araneae</taxon>
        <taxon>Araneomorphae</taxon>
        <taxon>Haplogynae</taxon>
        <taxon>Scytodoidea</taxon>
        <taxon>Sicariidae</taxon>
        <taxon>Loxosceles</taxon>
    </lineage>
</organism>
<feature type="chain" id="PRO_0000392846" description="Dermonecrotic toxin LhSicTox-alphaVI1ii">
    <location>
        <begin position="1" status="less than"/>
        <end position="275"/>
    </location>
</feature>
<feature type="active site" evidence="5">
    <location>
        <position position="5"/>
    </location>
</feature>
<feature type="active site" description="Nucleophile" evidence="5">
    <location>
        <position position="41"/>
    </location>
</feature>
<feature type="binding site" evidence="5">
    <location>
        <position position="25"/>
    </location>
    <ligand>
        <name>Mg(2+)</name>
        <dbReference type="ChEBI" id="CHEBI:18420"/>
    </ligand>
</feature>
<feature type="binding site" evidence="5">
    <location>
        <position position="27"/>
    </location>
    <ligand>
        <name>Mg(2+)</name>
        <dbReference type="ChEBI" id="CHEBI:18420"/>
    </ligand>
</feature>
<feature type="binding site" evidence="5">
    <location>
        <position position="85"/>
    </location>
    <ligand>
        <name>Mg(2+)</name>
        <dbReference type="ChEBI" id="CHEBI:18420"/>
    </ligand>
</feature>
<feature type="disulfide bond" evidence="3">
    <location>
        <begin position="45"/>
        <end position="51"/>
    </location>
</feature>
<feature type="disulfide bond" evidence="3">
    <location>
        <begin position="47"/>
        <end position="192"/>
    </location>
</feature>
<feature type="non-terminal residue">
    <location>
        <position position="1"/>
    </location>
</feature>
<proteinExistence type="evidence at transcript level"/>
<comment type="function">
    <text evidence="1 3">Dermonecrotic toxins cleave the phosphodiester linkage between the phosphate and headgroup of certain phospholipids (sphingolipid and lysolipid substrates), forming an alcohol (often choline) and a cyclic phosphate (By similarity). This toxin acts on sphingomyelin (SM) (By similarity). It may also act on ceramide phosphoethanolamine (CPE), lysophosphatidylcholine (LPC) and lysophosphatidylethanolamine (LPE), but not on lysophosphatidylserine (LPS), and lysophosphatidylglycerol (LPG) (By similarity). It acts by transphosphatidylation, releasing exclusively cyclic phosphate products as second products (By similarity). Induces dermonecrosis, hemolysis, increased vascular permeability, edema, inflammatory response, and platelet aggregation (By similarity).</text>
</comment>
<comment type="catalytic activity">
    <reaction evidence="1">
        <text>an N-(acyl)-sphingosylphosphocholine = an N-(acyl)-sphingosyl-1,3-cyclic phosphate + choline</text>
        <dbReference type="Rhea" id="RHEA:60652"/>
        <dbReference type="ChEBI" id="CHEBI:15354"/>
        <dbReference type="ChEBI" id="CHEBI:64583"/>
        <dbReference type="ChEBI" id="CHEBI:143892"/>
    </reaction>
</comment>
<comment type="catalytic activity">
    <reaction evidence="1">
        <text>an N-(acyl)-sphingosylphosphoethanolamine = an N-(acyl)-sphingosyl-1,3-cyclic phosphate + ethanolamine</text>
        <dbReference type="Rhea" id="RHEA:60648"/>
        <dbReference type="ChEBI" id="CHEBI:57603"/>
        <dbReference type="ChEBI" id="CHEBI:143891"/>
        <dbReference type="ChEBI" id="CHEBI:143892"/>
    </reaction>
</comment>
<comment type="catalytic activity">
    <reaction evidence="1">
        <text>a 1-acyl-sn-glycero-3-phosphocholine = a 1-acyl-sn-glycero-2,3-cyclic phosphate + choline</text>
        <dbReference type="Rhea" id="RHEA:60700"/>
        <dbReference type="ChEBI" id="CHEBI:15354"/>
        <dbReference type="ChEBI" id="CHEBI:58168"/>
        <dbReference type="ChEBI" id="CHEBI:143947"/>
    </reaction>
</comment>
<comment type="catalytic activity">
    <reaction evidence="1">
        <text>a 1-acyl-sn-glycero-3-phosphoethanolamine = a 1-acyl-sn-glycero-2,3-cyclic phosphate + ethanolamine</text>
        <dbReference type="Rhea" id="RHEA:60704"/>
        <dbReference type="ChEBI" id="CHEBI:57603"/>
        <dbReference type="ChEBI" id="CHEBI:64381"/>
        <dbReference type="ChEBI" id="CHEBI:143947"/>
    </reaction>
</comment>
<comment type="cofactor">
    <cofactor evidence="5">
        <name>Mg(2+)</name>
        <dbReference type="ChEBI" id="CHEBI:18420"/>
    </cofactor>
    <text evidence="5">Binds 1 Mg(2+) ion per subunit.</text>
</comment>
<comment type="subcellular location">
    <subcellularLocation>
        <location evidence="8">Secreted</location>
    </subcellularLocation>
</comment>
<comment type="tissue specificity">
    <text evidence="8">Expressed by the venom gland.</text>
</comment>
<comment type="similarity">
    <text evidence="7">Belongs to the arthropod phospholipase D family. Class II subfamily.</text>
</comment>
<comment type="caution">
    <text evidence="1 2 4">The most common activity assay for dermonecrotic toxins detects enzymatic activity by monitoring choline release from substrate. Liberation of choline from sphingomyelin (SM) or lysophosphatidylcholine (LPC) is commonly assumed to result from substrate hydrolysis, giving either ceramide-1-phosphate (C1P) or lysophosphatidic acid (LPA), respectively, as a second product. However, two studies from Lajoie and colleagues (2013 and 2015) report the observation of exclusive formation of cyclic phosphate products as second products, resulting from intramolecular transphosphatidylation. Cyclic phosphates have vastly different biological properties from their monoester counterparts, and they may be relevant to the pathology of brown spider envenomation.</text>
</comment>
<sequence>WIMGHMVNAIYQIDEFVDLGANAIETDVEFSSSGKAKYTYHGVPCDCFRWCKKWENIDGFLEALRRATTPGDSKYRKELILVVLDLKLDYVYLSDAYDAGKDLAQRLVKHYWNGGRNGGRAYILLSVPVVEYYRLITGFRAHLMNEGYKDLLAKVGYDFSEDTYLSTIHDGFRNAGVRDKDHIWQSDGISNCFARTLTRLKEAVSNRDSTDGYSNKVYYWTVDKETSITDAINAGADGIMTNHPDRVINVLKDDEIKKKFRLARYRDNPWKTFRK</sequence>
<protein>
    <recommendedName>
        <fullName evidence="6">Dermonecrotic toxin LhSicTox-alphaVI1ii</fullName>
        <ecNumber evidence="4">4.6.1.-</ecNumber>
    </recommendedName>
    <alternativeName>
        <fullName>Phospholipase D</fullName>
        <shortName>PLD</shortName>
    </alternativeName>
    <alternativeName>
        <fullName>Sphingomyelin phosphodiesterase D</fullName>
        <shortName>SMD</shortName>
        <shortName>SMase D</shortName>
        <shortName>Sphingomyelinase D</shortName>
    </alternativeName>
</protein>
<keyword id="KW-0204">Cytolysis</keyword>
<keyword id="KW-1061">Dermonecrotic toxin</keyword>
<keyword id="KW-1015">Disulfide bond</keyword>
<keyword id="KW-0354">Hemolysis</keyword>
<keyword id="KW-0442">Lipid degradation</keyword>
<keyword id="KW-0443">Lipid metabolism</keyword>
<keyword id="KW-0456">Lyase</keyword>
<keyword id="KW-0460">Magnesium</keyword>
<keyword id="KW-0479">Metal-binding</keyword>
<keyword id="KW-0964">Secreted</keyword>
<keyword id="KW-0800">Toxin</keyword>
<evidence type="ECO:0000250" key="1">
    <source>
        <dbReference type="UniProtKB" id="A0A0D4WTV1"/>
    </source>
</evidence>
<evidence type="ECO:0000250" key="2">
    <source>
        <dbReference type="UniProtKB" id="A0A0D4WV12"/>
    </source>
</evidence>
<evidence type="ECO:0000250" key="3">
    <source>
        <dbReference type="UniProtKB" id="P0CE80"/>
    </source>
</evidence>
<evidence type="ECO:0000250" key="4">
    <source>
        <dbReference type="UniProtKB" id="Q4ZFU2"/>
    </source>
</evidence>
<evidence type="ECO:0000250" key="5">
    <source>
        <dbReference type="UniProtKB" id="Q8I914"/>
    </source>
</evidence>
<evidence type="ECO:0000303" key="6">
    <source>
    </source>
</evidence>
<evidence type="ECO:0000305" key="7"/>
<evidence type="ECO:0000305" key="8">
    <source>
    </source>
</evidence>
<reference key="1">
    <citation type="journal article" date="2009" name="Mol. Biol. Evol.">
        <title>Molecular evolution, functional variation, and proposed nomenclature of the gene family that includes sphingomyelinase D in sicariid spider venoms.</title>
        <authorList>
            <person name="Binford G.J."/>
            <person name="Bodner M.R."/>
            <person name="Cordes M.H."/>
            <person name="Baldwin K.L."/>
            <person name="Rynerson M.R."/>
            <person name="Burns S.N."/>
            <person name="Zobel-Thropp P.A."/>
        </authorList>
    </citation>
    <scope>NUCLEOTIDE SEQUENCE [MRNA]</scope>
    <scope>NOMENCLATURE</scope>
    <source>
        <tissue>Venom gland</tissue>
    </source>
</reference>